<protein>
    <recommendedName>
        <fullName evidence="1">DNA-directed RNA polymerase subunit beta''</fullName>
        <ecNumber evidence="1">2.7.7.6</ecNumber>
    </recommendedName>
    <alternativeName>
        <fullName evidence="1">PEP</fullName>
    </alternativeName>
    <alternativeName>
        <fullName evidence="1">Plastid-encoded RNA polymerase subunit beta''</fullName>
        <shortName evidence="1">RNA polymerase subunit beta''</shortName>
    </alternativeName>
</protein>
<comment type="function">
    <text evidence="1">DNA-dependent RNA polymerase catalyzes the transcription of DNA into RNA using the four ribonucleoside triphosphates as substrates.</text>
</comment>
<comment type="catalytic activity">
    <reaction evidence="1">
        <text>RNA(n) + a ribonucleoside 5'-triphosphate = RNA(n+1) + diphosphate</text>
        <dbReference type="Rhea" id="RHEA:21248"/>
        <dbReference type="Rhea" id="RHEA-COMP:14527"/>
        <dbReference type="Rhea" id="RHEA-COMP:17342"/>
        <dbReference type="ChEBI" id="CHEBI:33019"/>
        <dbReference type="ChEBI" id="CHEBI:61557"/>
        <dbReference type="ChEBI" id="CHEBI:140395"/>
        <dbReference type="EC" id="2.7.7.6"/>
    </reaction>
</comment>
<comment type="cofactor">
    <cofactor evidence="1">
        <name>Zn(2+)</name>
        <dbReference type="ChEBI" id="CHEBI:29105"/>
    </cofactor>
    <text evidence="1">Binds 1 Zn(2+) ion per subunit.</text>
</comment>
<comment type="subunit">
    <text evidence="1">In plastids the minimal PEP RNA polymerase catalytic core is composed of four subunits: alpha, beta, beta', and beta''. When a (nuclear-encoded) sigma factor is associated with the core the holoenzyme is formed, which can initiate transcription.</text>
</comment>
<comment type="subcellular location">
    <subcellularLocation>
        <location evidence="1">Plastid</location>
        <location evidence="1">Chloroplast</location>
    </subcellularLocation>
</comment>
<comment type="similarity">
    <text evidence="1">Belongs to the RNA polymerase beta' chain family. RpoC2 subfamily.</text>
</comment>
<geneLocation type="chloroplast"/>
<dbReference type="EC" id="2.7.7.6" evidence="1"/>
<dbReference type="EMBL" id="AP009368">
    <property type="protein sequence ID" value="BAF49929.1"/>
    <property type="molecule type" value="Genomic_DNA"/>
</dbReference>
<dbReference type="RefSeq" id="YP_001123105.1">
    <property type="nucleotide sequence ID" value="NC_009267.1"/>
</dbReference>
<dbReference type="SMR" id="A4QJS3"/>
<dbReference type="GeneID" id="4962369"/>
<dbReference type="GO" id="GO:0009507">
    <property type="term" value="C:chloroplast"/>
    <property type="evidence" value="ECO:0007669"/>
    <property type="project" value="UniProtKB-SubCell"/>
</dbReference>
<dbReference type="GO" id="GO:0000428">
    <property type="term" value="C:DNA-directed RNA polymerase complex"/>
    <property type="evidence" value="ECO:0007669"/>
    <property type="project" value="UniProtKB-KW"/>
</dbReference>
<dbReference type="GO" id="GO:0005739">
    <property type="term" value="C:mitochondrion"/>
    <property type="evidence" value="ECO:0007669"/>
    <property type="project" value="GOC"/>
</dbReference>
<dbReference type="GO" id="GO:0003677">
    <property type="term" value="F:DNA binding"/>
    <property type="evidence" value="ECO:0007669"/>
    <property type="project" value="UniProtKB-UniRule"/>
</dbReference>
<dbReference type="GO" id="GO:0003899">
    <property type="term" value="F:DNA-directed RNA polymerase activity"/>
    <property type="evidence" value="ECO:0007669"/>
    <property type="project" value="UniProtKB-UniRule"/>
</dbReference>
<dbReference type="GO" id="GO:0008270">
    <property type="term" value="F:zinc ion binding"/>
    <property type="evidence" value="ECO:0007669"/>
    <property type="project" value="UniProtKB-UniRule"/>
</dbReference>
<dbReference type="GO" id="GO:0006351">
    <property type="term" value="P:DNA-templated transcription"/>
    <property type="evidence" value="ECO:0007669"/>
    <property type="project" value="UniProtKB-UniRule"/>
</dbReference>
<dbReference type="CDD" id="cd02655">
    <property type="entry name" value="RNAP_beta'_C"/>
    <property type="match status" value="1"/>
</dbReference>
<dbReference type="FunFam" id="1.10.132.30:FF:000002">
    <property type="entry name" value="DNA-directed RNA polymerase subunit beta"/>
    <property type="match status" value="1"/>
</dbReference>
<dbReference type="FunFam" id="1.10.1790.20:FF:000002">
    <property type="entry name" value="DNA-directed RNA polymerase subunit beta"/>
    <property type="match status" value="1"/>
</dbReference>
<dbReference type="FunFam" id="1.10.274.100:FF:000011">
    <property type="entry name" value="DNA-directed RNA polymerase subunit beta"/>
    <property type="match status" value="1"/>
</dbReference>
<dbReference type="Gene3D" id="1.10.132.30">
    <property type="match status" value="1"/>
</dbReference>
<dbReference type="Gene3D" id="1.10.150.390">
    <property type="match status" value="1"/>
</dbReference>
<dbReference type="Gene3D" id="1.10.1790.20">
    <property type="match status" value="1"/>
</dbReference>
<dbReference type="Gene3D" id="1.10.274.100">
    <property type="entry name" value="RNA polymerase Rpb1, domain 3"/>
    <property type="match status" value="1"/>
</dbReference>
<dbReference type="HAMAP" id="MF_01324">
    <property type="entry name" value="RNApol_bact_RpoC2"/>
    <property type="match status" value="1"/>
</dbReference>
<dbReference type="InterPro" id="IPR012756">
    <property type="entry name" value="DNA-dir_RpoC2_beta_pp"/>
</dbReference>
<dbReference type="InterPro" id="IPR050254">
    <property type="entry name" value="RNA_pol_beta''_euk"/>
</dbReference>
<dbReference type="InterPro" id="IPR042102">
    <property type="entry name" value="RNA_pol_Rpb1_3_sf"/>
</dbReference>
<dbReference type="InterPro" id="IPR007083">
    <property type="entry name" value="RNA_pol_Rpb1_4"/>
</dbReference>
<dbReference type="InterPro" id="IPR007081">
    <property type="entry name" value="RNA_pol_Rpb1_5"/>
</dbReference>
<dbReference type="InterPro" id="IPR038120">
    <property type="entry name" value="Rpb1_funnel_sf"/>
</dbReference>
<dbReference type="NCBIfam" id="TIGR02388">
    <property type="entry name" value="rpoC2_cyan"/>
    <property type="match status" value="1"/>
</dbReference>
<dbReference type="PANTHER" id="PTHR34995">
    <property type="entry name" value="DNA-DIRECTED RNA POLYMERASE SUBUNIT BETA"/>
    <property type="match status" value="1"/>
</dbReference>
<dbReference type="PANTHER" id="PTHR34995:SF1">
    <property type="entry name" value="DNA-DIRECTED RNA POLYMERASE SUBUNIT BETA"/>
    <property type="match status" value="1"/>
</dbReference>
<dbReference type="Pfam" id="PF05000">
    <property type="entry name" value="RNA_pol_Rpb1_4"/>
    <property type="match status" value="1"/>
</dbReference>
<dbReference type="Pfam" id="PF04998">
    <property type="entry name" value="RNA_pol_Rpb1_5"/>
    <property type="match status" value="2"/>
</dbReference>
<dbReference type="SUPFAM" id="SSF64484">
    <property type="entry name" value="beta and beta-prime subunits of DNA dependent RNA-polymerase"/>
    <property type="match status" value="1"/>
</dbReference>
<evidence type="ECO:0000255" key="1">
    <source>
        <dbReference type="HAMAP-Rule" id="MF_01324"/>
    </source>
</evidence>
<reference key="1">
    <citation type="submission" date="2007-03" db="EMBL/GenBank/DDBJ databases">
        <title>Sequence analysis of Arabidopsis pumila JS2 chloroplast DNA.</title>
        <authorList>
            <person name="Hosouchi T."/>
            <person name="Tsuruoka H."/>
            <person name="Kotani H."/>
        </authorList>
    </citation>
    <scope>NUCLEOTIDE SEQUENCE [LARGE SCALE GENOMIC DNA]</scope>
</reference>
<keyword id="KW-0150">Chloroplast</keyword>
<keyword id="KW-0240">DNA-directed RNA polymerase</keyword>
<keyword id="KW-0479">Metal-binding</keyword>
<keyword id="KW-0548">Nucleotidyltransferase</keyword>
<keyword id="KW-0934">Plastid</keyword>
<keyword id="KW-0804">Transcription</keyword>
<keyword id="KW-0808">Transferase</keyword>
<keyword id="KW-0862">Zinc</keyword>
<organism>
    <name type="scientific">Olimarabidopsis pumila</name>
    <name type="common">Dwarf rocket</name>
    <name type="synonym">Arabidopsis griffithiana</name>
    <dbReference type="NCBI Taxonomy" id="74718"/>
    <lineage>
        <taxon>Eukaryota</taxon>
        <taxon>Viridiplantae</taxon>
        <taxon>Streptophyta</taxon>
        <taxon>Embryophyta</taxon>
        <taxon>Tracheophyta</taxon>
        <taxon>Spermatophyta</taxon>
        <taxon>Magnoliopsida</taxon>
        <taxon>eudicotyledons</taxon>
        <taxon>Gunneridae</taxon>
        <taxon>Pentapetalae</taxon>
        <taxon>rosids</taxon>
        <taxon>malvids</taxon>
        <taxon>Brassicales</taxon>
        <taxon>Brassicaceae</taxon>
        <taxon>Alyssopsideae</taxon>
        <taxon>Olimarabidopsis</taxon>
    </lineage>
</organism>
<gene>
    <name evidence="1" type="primary">rpoC2</name>
</gene>
<sequence>MAERANLVFHNKVIDGTAIKRLISRLIDHFGMAYTSHILDQVKTLGFQQATATSISLGIDDLLTIPSKGWLVQDAEQQSWILEKHHHYGNVHAVEKLRQSIEIWYATSEYLRQEMNPNFRMTDPFNPVHMMSFSGARGNASQVHQLVGMRGLMSDPQGQMIDLPIQSNLREGLSLTEYIISCYGARKGVVDTAVRTSDAGYLTRRLVEVVQHIVVRRTDCGTIRGISVSPRNKNRMMSERIFIQTLIGRVLADDIYIGSRCVAFRNQDLGIGLVNRLITFGTQSISIRTPFTCRSTSWICRLCYGRSPTHGDLVELGEAVGIIAGQSIGEPGTQLTLRTFHTGGVFTGGTAEHVRAPYSGKIKFNEDLVHPTRTRHGHPAFLCYIDLSVIIESEDIIHSVTIPPKSFLLVQNDQYVESEQVIAEIREGTYTFHFKERVRKYIYSDSEGEMHWSTDVSHAPEFTYSNVHLLPKTSHLWILSGGSCGSSLIFFSIHKDQDQMNIPFLSVERKSISSLSVNNDQVSQKVLSSDFADQTKFGIPDYSEFKGNLGTSHYNFIYSAIFHENSDLLAKRRRNRFLIPFQSIQEQEKEFIPHSGISIEIPINGIFRRNSIFAFFDDPRYRRKSSGILKYGTPKADSIIQKADMIEYRGVQKFKTKYEMKVDRFFFIPEEVHILPESSAIMVQNYSIIGVDTRLALNIRSQVGGLIRVERKKKRIELKIFSGDIHFPDKTDKISRHSGILIPPGRGKKNSKESKKFQNWIYVQRITPTKKKFFVLVRPVATYEIADSINLATLFPQDLFREKDNIQLRVFNYILYGNSKPTQGISDTSIQLVRTCLVLNWDQDNKNSSLEEVRAFFVEVSTKGLIRDFIRIGLVKSHISYIRKRNNSRDSGLISADHMNPFYSISPKAGILQQSLRQNHGTIRMFLNRNKESQSLLILSSSNCFRMGPFNHLKYHNVINQSITKNPLITIKNSSGPLGTATQISNFYSFLPLLTYNKISLIKYLKLDNLKYIFQVINSYLIDENGKIFNLDPYSNVVLNPFKLNWYFLHQNYHHNYCEETSTIISLGQLFCENVCIAKKEPHLKSGQVLIVQRDSVVIRSAKPYLATPGAKVHGHYREILYEGDTLVTFIYEKSRSGDITQGLPKVEQVLEVRSIDSISLNLEKRIKGWNKCITRILGIPWGFLIGAELTIVQSRISLVNKIQKVYRSQGVQIHNRHIEIIVRQITSKVLVSEEGMSNVFLPGELIGLLRAERTGRALEESICYRAVLLGITRASLNTQSFISEASFQETARVLAKAALRGRIDWLKGLKENVVLGGVIPAGTGFNKGLVHCSRQHTNILLEKKTKNLSLFEGDMRDILFYHREFCDSAISKSAFSRI</sequence>
<proteinExistence type="inferred from homology"/>
<accession>A4QJS3</accession>
<name>RPOC2_OLIPU</name>
<feature type="chain" id="PRO_0000353578" description="DNA-directed RNA polymerase subunit beta''">
    <location>
        <begin position="1"/>
        <end position="1379"/>
    </location>
</feature>
<feature type="binding site" evidence="1">
    <location>
        <position position="220"/>
    </location>
    <ligand>
        <name>Zn(2+)</name>
        <dbReference type="ChEBI" id="CHEBI:29105"/>
    </ligand>
</feature>
<feature type="binding site" evidence="1">
    <location>
        <position position="293"/>
    </location>
    <ligand>
        <name>Zn(2+)</name>
        <dbReference type="ChEBI" id="CHEBI:29105"/>
    </ligand>
</feature>
<feature type="binding site" evidence="1">
    <location>
        <position position="300"/>
    </location>
    <ligand>
        <name>Zn(2+)</name>
        <dbReference type="ChEBI" id="CHEBI:29105"/>
    </ligand>
</feature>
<feature type="binding site" evidence="1">
    <location>
        <position position="303"/>
    </location>
    <ligand>
        <name>Zn(2+)</name>
        <dbReference type="ChEBI" id="CHEBI:29105"/>
    </ligand>
</feature>